<protein>
    <recommendedName>
        <fullName evidence="1">High frequency lysogenization protein HflD homolog</fullName>
    </recommendedName>
</protein>
<evidence type="ECO:0000255" key="1">
    <source>
        <dbReference type="HAMAP-Rule" id="MF_00695"/>
    </source>
</evidence>
<proteinExistence type="inferred from homology"/>
<gene>
    <name evidence="1" type="primary">hflD</name>
    <name type="ordered locus">MCA0201</name>
</gene>
<sequence>MIKTLDNQVIALAGLAQATHLVRQIAQRGSADAGDMEAVVRSVFAIDADDVPSVYGGVDKIKTGLQILDRQLAGFEPPDAELARYGATLILLERKLVSAPRLLETLRTGIEQVKEQAEYFGELNDTVYANLADLYQRTVSQLRPRVMVNGQPSHLTNSTNANRIRALLLAGIRSVVLWRQCGGERWKLLFQRSAMRKEARRLLQSSQ</sequence>
<accession>Q60CA8</accession>
<name>HFLD_METCA</name>
<reference key="1">
    <citation type="journal article" date="2004" name="PLoS Biol.">
        <title>Genomic insights into methanotrophy: the complete genome sequence of Methylococcus capsulatus (Bath).</title>
        <authorList>
            <person name="Ward N.L."/>
            <person name="Larsen O."/>
            <person name="Sakwa J."/>
            <person name="Bruseth L."/>
            <person name="Khouri H.M."/>
            <person name="Durkin A.S."/>
            <person name="Dimitrov G."/>
            <person name="Jiang L."/>
            <person name="Scanlan D."/>
            <person name="Kang K.H."/>
            <person name="Lewis M.R."/>
            <person name="Nelson K.E."/>
            <person name="Methe B.A."/>
            <person name="Wu M."/>
            <person name="Heidelberg J.F."/>
            <person name="Paulsen I.T."/>
            <person name="Fouts D.E."/>
            <person name="Ravel J."/>
            <person name="Tettelin H."/>
            <person name="Ren Q."/>
            <person name="Read T.D."/>
            <person name="DeBoy R.T."/>
            <person name="Seshadri R."/>
            <person name="Salzberg S.L."/>
            <person name="Jensen H.B."/>
            <person name="Birkeland N.K."/>
            <person name="Nelson W.C."/>
            <person name="Dodson R.J."/>
            <person name="Grindhaug S.H."/>
            <person name="Holt I.E."/>
            <person name="Eidhammer I."/>
            <person name="Jonasen I."/>
            <person name="Vanaken S."/>
            <person name="Utterback T.R."/>
            <person name="Feldblyum T.V."/>
            <person name="Fraser C.M."/>
            <person name="Lillehaug J.R."/>
            <person name="Eisen J.A."/>
        </authorList>
    </citation>
    <scope>NUCLEOTIDE SEQUENCE [LARGE SCALE GENOMIC DNA]</scope>
    <source>
        <strain>ATCC 33009 / NCIMB 11132 / Bath</strain>
    </source>
</reference>
<dbReference type="EMBL" id="AE017282">
    <property type="protein sequence ID" value="AAU90683.1"/>
    <property type="molecule type" value="Genomic_DNA"/>
</dbReference>
<dbReference type="RefSeq" id="WP_010959568.1">
    <property type="nucleotide sequence ID" value="NC_002977.6"/>
</dbReference>
<dbReference type="SMR" id="Q60CA8"/>
<dbReference type="STRING" id="243233.MCA0201"/>
<dbReference type="GeneID" id="88222547"/>
<dbReference type="KEGG" id="mca:MCA0201"/>
<dbReference type="eggNOG" id="COG2915">
    <property type="taxonomic scope" value="Bacteria"/>
</dbReference>
<dbReference type="HOGENOM" id="CLU_098920_0_0_6"/>
<dbReference type="Proteomes" id="UP000006821">
    <property type="component" value="Chromosome"/>
</dbReference>
<dbReference type="GO" id="GO:0005737">
    <property type="term" value="C:cytoplasm"/>
    <property type="evidence" value="ECO:0007669"/>
    <property type="project" value="UniProtKB-SubCell"/>
</dbReference>
<dbReference type="GO" id="GO:0005886">
    <property type="term" value="C:plasma membrane"/>
    <property type="evidence" value="ECO:0007669"/>
    <property type="project" value="UniProtKB-SubCell"/>
</dbReference>
<dbReference type="Gene3D" id="1.10.3890.10">
    <property type="entry name" value="HflD-like"/>
    <property type="match status" value="1"/>
</dbReference>
<dbReference type="HAMAP" id="MF_00695">
    <property type="entry name" value="HflD_protein"/>
    <property type="match status" value="1"/>
</dbReference>
<dbReference type="InterPro" id="IPR007451">
    <property type="entry name" value="HflD"/>
</dbReference>
<dbReference type="InterPro" id="IPR035932">
    <property type="entry name" value="HflD-like_sf"/>
</dbReference>
<dbReference type="NCBIfam" id="NF001246">
    <property type="entry name" value="PRK00218.1-2"/>
    <property type="match status" value="1"/>
</dbReference>
<dbReference type="PANTHER" id="PTHR38100">
    <property type="entry name" value="HIGH FREQUENCY LYSOGENIZATION PROTEIN HFLD"/>
    <property type="match status" value="1"/>
</dbReference>
<dbReference type="PANTHER" id="PTHR38100:SF1">
    <property type="entry name" value="HIGH FREQUENCY LYSOGENIZATION PROTEIN HFLD"/>
    <property type="match status" value="1"/>
</dbReference>
<dbReference type="Pfam" id="PF04356">
    <property type="entry name" value="DUF489"/>
    <property type="match status" value="1"/>
</dbReference>
<dbReference type="SUPFAM" id="SSF101322">
    <property type="entry name" value="YcfC-like"/>
    <property type="match status" value="1"/>
</dbReference>
<feature type="chain" id="PRO_0000390642" description="High frequency lysogenization protein HflD homolog">
    <location>
        <begin position="1"/>
        <end position="207"/>
    </location>
</feature>
<comment type="subcellular location">
    <subcellularLocation>
        <location>Cytoplasm</location>
    </subcellularLocation>
    <subcellularLocation>
        <location evidence="1">Cell inner membrane</location>
        <topology evidence="1">Peripheral membrane protein</topology>
        <orientation evidence="1">Cytoplasmic side</orientation>
    </subcellularLocation>
</comment>
<comment type="similarity">
    <text evidence="1">Belongs to the HflD family.</text>
</comment>
<keyword id="KW-0997">Cell inner membrane</keyword>
<keyword id="KW-1003">Cell membrane</keyword>
<keyword id="KW-0963">Cytoplasm</keyword>
<keyword id="KW-0472">Membrane</keyword>
<keyword id="KW-1185">Reference proteome</keyword>
<organism>
    <name type="scientific">Methylococcus capsulatus (strain ATCC 33009 / NCIMB 11132 / Bath)</name>
    <dbReference type="NCBI Taxonomy" id="243233"/>
    <lineage>
        <taxon>Bacteria</taxon>
        <taxon>Pseudomonadati</taxon>
        <taxon>Pseudomonadota</taxon>
        <taxon>Gammaproteobacteria</taxon>
        <taxon>Methylococcales</taxon>
        <taxon>Methylococcaceae</taxon>
        <taxon>Methylococcus</taxon>
    </lineage>
</organism>